<evidence type="ECO:0000255" key="1">
    <source>
        <dbReference type="HAMAP-Rule" id="MF_00226"/>
    </source>
</evidence>
<gene>
    <name evidence="1" type="primary">cinA</name>
    <name type="ordered locus">BPUM_1597</name>
</gene>
<accession>A8FDG2</accession>
<reference key="1">
    <citation type="journal article" date="2007" name="PLoS ONE">
        <title>Paradoxical DNA repair and peroxide resistance gene conservation in Bacillus pumilus SAFR-032.</title>
        <authorList>
            <person name="Gioia J."/>
            <person name="Yerrapragada S."/>
            <person name="Qin X."/>
            <person name="Jiang H."/>
            <person name="Igboeli O.C."/>
            <person name="Muzny D."/>
            <person name="Dugan-Rocha S."/>
            <person name="Ding Y."/>
            <person name="Hawes A."/>
            <person name="Liu W."/>
            <person name="Perez L."/>
            <person name="Kovar C."/>
            <person name="Dinh H."/>
            <person name="Lee S."/>
            <person name="Nazareth L."/>
            <person name="Blyth P."/>
            <person name="Holder M."/>
            <person name="Buhay C."/>
            <person name="Tirumalai M.R."/>
            <person name="Liu Y."/>
            <person name="Dasgupta I."/>
            <person name="Bokhetache L."/>
            <person name="Fujita M."/>
            <person name="Karouia F."/>
            <person name="Eswara Moorthy P."/>
            <person name="Siefert J."/>
            <person name="Uzman A."/>
            <person name="Buzumbo P."/>
            <person name="Verma A."/>
            <person name="Zwiya H."/>
            <person name="McWilliams B.D."/>
            <person name="Olowu A."/>
            <person name="Clinkenbeard K.D."/>
            <person name="Newcombe D."/>
            <person name="Golebiewski L."/>
            <person name="Petrosino J.F."/>
            <person name="Nicholson W.L."/>
            <person name="Fox G.E."/>
            <person name="Venkateswaran K."/>
            <person name="Highlander S.K."/>
            <person name="Weinstock G.M."/>
        </authorList>
    </citation>
    <scope>NUCLEOTIDE SEQUENCE [LARGE SCALE GENOMIC DNA]</scope>
    <source>
        <strain>SAFR-032</strain>
    </source>
</reference>
<protein>
    <recommendedName>
        <fullName evidence="1">Putative competence-damage inducible protein</fullName>
    </recommendedName>
</protein>
<name>CINA_BACP2</name>
<feature type="chain" id="PRO_1000058695" description="Putative competence-damage inducible protein">
    <location>
        <begin position="1"/>
        <end position="416"/>
    </location>
</feature>
<comment type="similarity">
    <text evidence="1">Belongs to the CinA family.</text>
</comment>
<sequence length="416" mass="45690">MKSERKAEIIAVGSELLLGQITNTNAQFISKQLAEIGVNVYYHTAVGDNPERLKRAIQVAQERSNFIIFSGGLGPTKDDLTKETIASTLGKELVLNEEAFESIQEYFRKTGRDMSPNNRKQALVLEGSDVLVNRFGMAPGMFIQENDTFYMLLPGPPSELHPMFENEAKPLISEKLGLKEKIVSVVLRFFGIGESQLETDLEDLIDAQTNPTIAPLASDGEVTLRLTAKHEDEKETERLLKETEAKILARVGEYFYGYGETSLVREASKALRDHGKTVAAAESLTGGMFSEWLTDLEGASSILSGSIVCYTNQVKQQVLGCREETLSSHGAVSKECALELAEGVRKLTGSDIGISFTGVAGPDTHEGQPVGKVFIGLSTKDHTDVFEWMFTGSRSGIRKRAVKYGLHHLLNLLKES</sequence>
<proteinExistence type="inferred from homology"/>
<organism>
    <name type="scientific">Bacillus pumilus (strain SAFR-032)</name>
    <dbReference type="NCBI Taxonomy" id="315750"/>
    <lineage>
        <taxon>Bacteria</taxon>
        <taxon>Bacillati</taxon>
        <taxon>Bacillota</taxon>
        <taxon>Bacilli</taxon>
        <taxon>Bacillales</taxon>
        <taxon>Bacillaceae</taxon>
        <taxon>Bacillus</taxon>
    </lineage>
</organism>
<dbReference type="EMBL" id="CP000813">
    <property type="protein sequence ID" value="ABV62279.1"/>
    <property type="molecule type" value="Genomic_DNA"/>
</dbReference>
<dbReference type="RefSeq" id="WP_012010019.1">
    <property type="nucleotide sequence ID" value="NZ_VEIS01000003.1"/>
</dbReference>
<dbReference type="SMR" id="A8FDG2"/>
<dbReference type="STRING" id="315750.BPUM_1597"/>
<dbReference type="GeneID" id="5620860"/>
<dbReference type="KEGG" id="bpu:BPUM_1597"/>
<dbReference type="eggNOG" id="COG1058">
    <property type="taxonomic scope" value="Bacteria"/>
</dbReference>
<dbReference type="eggNOG" id="COG1546">
    <property type="taxonomic scope" value="Bacteria"/>
</dbReference>
<dbReference type="HOGENOM" id="CLU_030805_9_3_9"/>
<dbReference type="OrthoDB" id="9801454at2"/>
<dbReference type="Proteomes" id="UP000001355">
    <property type="component" value="Chromosome"/>
</dbReference>
<dbReference type="CDD" id="cd00885">
    <property type="entry name" value="cinA"/>
    <property type="match status" value="1"/>
</dbReference>
<dbReference type="Gene3D" id="3.30.70.2860">
    <property type="match status" value="1"/>
</dbReference>
<dbReference type="Gene3D" id="3.90.950.20">
    <property type="entry name" value="CinA-like"/>
    <property type="match status" value="1"/>
</dbReference>
<dbReference type="Gene3D" id="3.40.980.10">
    <property type="entry name" value="MoaB/Mog-like domain"/>
    <property type="match status" value="1"/>
</dbReference>
<dbReference type="HAMAP" id="MF_00226_B">
    <property type="entry name" value="CinA_B"/>
    <property type="match status" value="1"/>
</dbReference>
<dbReference type="InterPro" id="IPR050101">
    <property type="entry name" value="CinA"/>
</dbReference>
<dbReference type="InterPro" id="IPR036653">
    <property type="entry name" value="CinA-like_C"/>
</dbReference>
<dbReference type="InterPro" id="IPR008136">
    <property type="entry name" value="CinA_C"/>
</dbReference>
<dbReference type="InterPro" id="IPR041424">
    <property type="entry name" value="CinA_KH"/>
</dbReference>
<dbReference type="InterPro" id="IPR008135">
    <property type="entry name" value="Competence-induced_CinA"/>
</dbReference>
<dbReference type="InterPro" id="IPR036425">
    <property type="entry name" value="MoaB/Mog-like_dom_sf"/>
</dbReference>
<dbReference type="InterPro" id="IPR001453">
    <property type="entry name" value="MoaB/Mog_dom"/>
</dbReference>
<dbReference type="NCBIfam" id="TIGR00200">
    <property type="entry name" value="cinA_nterm"/>
    <property type="match status" value="1"/>
</dbReference>
<dbReference type="NCBIfam" id="TIGR00177">
    <property type="entry name" value="molyb_syn"/>
    <property type="match status" value="1"/>
</dbReference>
<dbReference type="NCBIfam" id="TIGR00199">
    <property type="entry name" value="PncC_domain"/>
    <property type="match status" value="1"/>
</dbReference>
<dbReference type="NCBIfam" id="NF001813">
    <property type="entry name" value="PRK00549.1"/>
    <property type="match status" value="1"/>
</dbReference>
<dbReference type="PANTHER" id="PTHR13939">
    <property type="entry name" value="NICOTINAMIDE-NUCLEOTIDE AMIDOHYDROLASE PNCC"/>
    <property type="match status" value="1"/>
</dbReference>
<dbReference type="PANTHER" id="PTHR13939:SF0">
    <property type="entry name" value="NMN AMIDOHYDROLASE-LIKE PROTEIN YFAY"/>
    <property type="match status" value="1"/>
</dbReference>
<dbReference type="Pfam" id="PF02464">
    <property type="entry name" value="CinA"/>
    <property type="match status" value="1"/>
</dbReference>
<dbReference type="Pfam" id="PF18146">
    <property type="entry name" value="CinA_KH"/>
    <property type="match status" value="1"/>
</dbReference>
<dbReference type="Pfam" id="PF00994">
    <property type="entry name" value="MoCF_biosynth"/>
    <property type="match status" value="1"/>
</dbReference>
<dbReference type="PIRSF" id="PIRSF006728">
    <property type="entry name" value="CinA"/>
    <property type="match status" value="1"/>
</dbReference>
<dbReference type="SMART" id="SM00852">
    <property type="entry name" value="MoCF_biosynth"/>
    <property type="match status" value="1"/>
</dbReference>
<dbReference type="SUPFAM" id="SSF142433">
    <property type="entry name" value="CinA-like"/>
    <property type="match status" value="1"/>
</dbReference>
<dbReference type="SUPFAM" id="SSF53218">
    <property type="entry name" value="Molybdenum cofactor biosynthesis proteins"/>
    <property type="match status" value="1"/>
</dbReference>